<name>TAL1_XENLA</name>
<evidence type="ECO:0000250" key="1">
    <source>
        <dbReference type="UniProtKB" id="P17542"/>
    </source>
</evidence>
<evidence type="ECO:0000250" key="2">
    <source>
        <dbReference type="UniProtKB" id="P22091"/>
    </source>
</evidence>
<evidence type="ECO:0000255" key="3"/>
<evidence type="ECO:0000255" key="4">
    <source>
        <dbReference type="PROSITE-ProRule" id="PRU00981"/>
    </source>
</evidence>
<evidence type="ECO:0000256" key="5">
    <source>
        <dbReference type="SAM" id="MobiDB-lite"/>
    </source>
</evidence>
<evidence type="ECO:0000269" key="6">
    <source>
    </source>
</evidence>
<evidence type="ECO:0000269" key="7">
    <source>
    </source>
</evidence>
<evidence type="ECO:0000269" key="8">
    <source>
    </source>
</evidence>
<evidence type="ECO:0000269" key="9">
    <source>
    </source>
</evidence>
<evidence type="ECO:0000303" key="10">
    <source>
    </source>
</evidence>
<evidence type="ECO:0000303" key="11">
    <source>
    </source>
</evidence>
<evidence type="ECO:0000303" key="12">
    <source>
    </source>
</evidence>
<evidence type="ECO:0000305" key="13"/>
<evidence type="ECO:0000312" key="14">
    <source>
        <dbReference type="EMBL" id="AAC14869.1"/>
    </source>
</evidence>
<evidence type="ECO:0000312" key="15">
    <source>
        <dbReference type="EMBL" id="AAH72130.1"/>
    </source>
</evidence>
<gene>
    <name evidence="1" type="primary">tal1</name>
    <name evidence="10 11 12" type="synonym">scl</name>
</gene>
<dbReference type="EMBL" id="AF060151">
    <property type="protein sequence ID" value="AAC14869.1"/>
    <property type="molecule type" value="mRNA"/>
</dbReference>
<dbReference type="EMBL" id="BC072130">
    <property type="protein sequence ID" value="AAH72130.1"/>
    <property type="status" value="ALT_INIT"/>
    <property type="molecule type" value="mRNA"/>
</dbReference>
<dbReference type="RefSeq" id="NP_001081746.1">
    <property type="nucleotide sequence ID" value="NM_001088277.1"/>
</dbReference>
<dbReference type="SMR" id="O73823"/>
<dbReference type="DNASU" id="398028"/>
<dbReference type="GeneID" id="398028"/>
<dbReference type="KEGG" id="xla:398028"/>
<dbReference type="AGR" id="Xenbase:XB-GENE-865312"/>
<dbReference type="CTD" id="398028"/>
<dbReference type="Xenbase" id="XB-GENE-865312">
    <property type="gene designation" value="tal1.S"/>
</dbReference>
<dbReference type="OrthoDB" id="10069510at2759"/>
<dbReference type="Proteomes" id="UP000186698">
    <property type="component" value="Chromosome 4S"/>
</dbReference>
<dbReference type="Bgee" id="398028">
    <property type="expression patterns" value="Expressed in lung and 13 other cell types or tissues"/>
</dbReference>
<dbReference type="GO" id="GO:0005634">
    <property type="term" value="C:nucleus"/>
    <property type="evidence" value="ECO:0000250"/>
    <property type="project" value="UniProtKB"/>
</dbReference>
<dbReference type="GO" id="GO:0003700">
    <property type="term" value="F:DNA-binding transcription factor activity"/>
    <property type="evidence" value="ECO:0000303"/>
    <property type="project" value="UniProtKB"/>
</dbReference>
<dbReference type="GO" id="GO:0000981">
    <property type="term" value="F:DNA-binding transcription factor activity, RNA polymerase II-specific"/>
    <property type="evidence" value="ECO:0000318"/>
    <property type="project" value="GO_Central"/>
</dbReference>
<dbReference type="GO" id="GO:0046983">
    <property type="term" value="F:protein dimerization activity"/>
    <property type="evidence" value="ECO:0007669"/>
    <property type="project" value="InterPro"/>
</dbReference>
<dbReference type="GO" id="GO:0000978">
    <property type="term" value="F:RNA polymerase II cis-regulatory region sequence-specific DNA binding"/>
    <property type="evidence" value="ECO:0000318"/>
    <property type="project" value="GO_Central"/>
</dbReference>
<dbReference type="GO" id="GO:0030218">
    <property type="term" value="P:erythrocyte differentiation"/>
    <property type="evidence" value="ECO:0000316"/>
    <property type="project" value="UniProtKB"/>
</dbReference>
<dbReference type="GO" id="GO:0030097">
    <property type="term" value="P:hemopoiesis"/>
    <property type="evidence" value="ECO:0000315"/>
    <property type="project" value="UniProtKB"/>
</dbReference>
<dbReference type="GO" id="GO:0006357">
    <property type="term" value="P:regulation of transcription by RNA polymerase II"/>
    <property type="evidence" value="ECO:0000318"/>
    <property type="project" value="GO_Central"/>
</dbReference>
<dbReference type="CDD" id="cd19706">
    <property type="entry name" value="bHLH_TS_TAL1"/>
    <property type="match status" value="1"/>
</dbReference>
<dbReference type="FunFam" id="4.10.280.10:FF:000015">
    <property type="entry name" value="T-cell acute lymphocytic leukemia 1"/>
    <property type="match status" value="1"/>
</dbReference>
<dbReference type="Gene3D" id="4.10.280.10">
    <property type="entry name" value="Helix-loop-helix DNA-binding domain"/>
    <property type="match status" value="1"/>
</dbReference>
<dbReference type="InterPro" id="IPR011598">
    <property type="entry name" value="bHLH_dom"/>
</dbReference>
<dbReference type="InterPro" id="IPR036638">
    <property type="entry name" value="HLH_DNA-bd_sf"/>
</dbReference>
<dbReference type="InterPro" id="IPR040238">
    <property type="entry name" value="TAL-like"/>
</dbReference>
<dbReference type="PANTHER" id="PTHR13864:SF26">
    <property type="entry name" value="T-CELL ACUTE LYMPHOCYTIC LEUKEMIA PROTEIN 1"/>
    <property type="match status" value="1"/>
</dbReference>
<dbReference type="PANTHER" id="PTHR13864">
    <property type="entry name" value="T-CELL ACUTE LYMPHOCYTIC LEUKEMIA/STEM CELL LEUKEMIA-RELATED"/>
    <property type="match status" value="1"/>
</dbReference>
<dbReference type="Pfam" id="PF00010">
    <property type="entry name" value="HLH"/>
    <property type="match status" value="1"/>
</dbReference>
<dbReference type="SMART" id="SM00353">
    <property type="entry name" value="HLH"/>
    <property type="match status" value="1"/>
</dbReference>
<dbReference type="SUPFAM" id="SSF47459">
    <property type="entry name" value="HLH, helix-loop-helix DNA-binding domain"/>
    <property type="match status" value="1"/>
</dbReference>
<dbReference type="PROSITE" id="PS50888">
    <property type="entry name" value="BHLH"/>
    <property type="match status" value="1"/>
</dbReference>
<comment type="function">
    <text evidence="6 9">Transcription factor that acts synergistically with lmo2 and gata1 to specify embryonic dorsal mesoderm to a hematopoietic fate.</text>
</comment>
<comment type="subcellular location">
    <subcellularLocation>
        <location evidence="2 4">Nucleus</location>
    </subcellularLocation>
</comment>
<comment type="tissue specificity">
    <text evidence="7 9">First expressed in patches on the ventral side of the embryo in a region that will give rise to hematopoietic tissue. By late neurula stages, expressed throughout the ventral blood island region. By tailbud stages, expression extends to probable vascular progenitor cells, but is excluded from the presumptive liver anlage. Also expressed in the central nervous system at the tailbud stage.</text>
</comment>
<comment type="developmental stage">
    <text evidence="9">First expressed at stage 12/13 (gastrula) of embryogenesis, with expression increasing through the tadpole stages.</text>
</comment>
<comment type="induction">
    <text evidence="7 8 9">By bmp-signaling in the ventral mesoderm. Inhibition by fgf regulates the timing of hematopoiesis.</text>
</comment>
<comment type="sequence caution" evidence="13">
    <conflict type="erroneous initiation">
        <sequence resource="EMBL-CDS" id="AAH72130"/>
    </conflict>
</comment>
<accession>O73823</accession>
<accession>Q6INZ1</accession>
<protein>
    <recommendedName>
        <fullName>T-cell acute lymphocytic leukemia protein 1</fullName>
        <shortName>TAL-1</shortName>
    </recommendedName>
    <alternativeName>
        <fullName>Stem cell leukemia protein SCL</fullName>
        <shortName>xSCL</shortName>
    </alternativeName>
</protein>
<keyword id="KW-0217">Developmental protein</keyword>
<keyword id="KW-0221">Differentiation</keyword>
<keyword id="KW-0238">DNA-binding</keyword>
<keyword id="KW-0539">Nucleus</keyword>
<keyword id="KW-1185">Reference proteome</keyword>
<keyword id="KW-0677">Repeat</keyword>
<keyword id="KW-0804">Transcription</keyword>
<keyword id="KW-0805">Transcription regulation</keyword>
<reference evidence="13 14" key="1">
    <citation type="journal article" date="1998" name="Development">
        <title>SCL specifies hematopoietic mesoderm in Xenopus embryos.</title>
        <authorList>
            <person name="Mead P.E."/>
            <person name="Kelley C.M."/>
            <person name="Hahn P.S."/>
            <person name="Piedad O."/>
            <person name="Zon L.I."/>
        </authorList>
    </citation>
    <scope>NUCLEOTIDE SEQUENCE [MRNA]</scope>
    <scope>FUNCTION</scope>
    <scope>TISSUE SPECIFICITY</scope>
    <scope>DEVELOPMENTAL STAGE</scope>
    <scope>INDUCTION</scope>
    <source>
        <tissue evidence="9">Tadpole erythrocyte</tissue>
    </source>
</reference>
<reference evidence="15" key="2">
    <citation type="submission" date="2004-06" db="EMBL/GenBank/DDBJ databases">
        <authorList>
            <consortium name="NIH - Xenopus Gene Collection (XGC) project"/>
        </authorList>
    </citation>
    <scope>NUCLEOTIDE SEQUENCE [LARGE SCALE MRNA]</scope>
    <source>
        <tissue evidence="15">Spleen</tissue>
    </source>
</reference>
<reference evidence="13" key="3">
    <citation type="journal article" date="2001" name="Development">
        <title>Primitive erythropoiesis in the Xenopus embryo: the synergistic role of LMO-2, SCL and GATA-binding proteins.</title>
        <authorList>
            <person name="Mead P.E."/>
            <person name="Deconinck A.E."/>
            <person name="Huber T.L."/>
            <person name="Orkin S.H."/>
            <person name="Zon L.I."/>
        </authorList>
    </citation>
    <scope>FUNCTION</scope>
</reference>
<reference evidence="13" key="4">
    <citation type="journal article" date="2003" name="Biochem. Biophys. Res. Commun.">
        <title>A BMP-4-dependent transcriptional control element in the 5' flanking region of Xenopus SCL gene.</title>
        <authorList>
            <person name="Sanada T."/>
            <person name="Park M.J."/>
            <person name="Araki A."/>
            <person name="Gotoh M."/>
            <person name="Izutsu Y."/>
            <person name="Maeno M."/>
        </authorList>
    </citation>
    <scope>TISSUE SPECIFICITY</scope>
    <scope>INDUCTION</scope>
</reference>
<reference evidence="13" key="5">
    <citation type="journal article" date="2008" name="Blood">
        <title>Fibroblast growth factor controls the timing of Scl, Lmo2, and Runx1 expression during embryonic blood development.</title>
        <authorList>
            <person name="Walmsley M."/>
            <person name="Cleaver D."/>
            <person name="Patient R.K."/>
        </authorList>
    </citation>
    <scope>INDUCTION</scope>
</reference>
<sequence length="394" mass="43043">MSLKMMERLSTDMDGTRDVASPPARQDAAEPERTVELSGVKEGAAPNSPPRAVPVIELLRRGEGLGNIKAREQELRLQNIRTTELCRATLTPATELCRAPLTPTTELCRAPLTPTTELCRAPLTPTTELCRPPLTPAAEFCRASLTPASELCRAPSSVTGPSLTATTELCRPPIPLPTPSTGPPAEQAVEARMVQLSPTASLPLQAAGRTMLYGLNQPLASDNSGYFGDPDTFPMYTSNSRAKRRPGPIEVEISEGPQPKVVRRIFTNSRERWRQQNVNGAFAELRKLIPTHPPDKKLSKNEILRLAMKYINFLAKLLDDQEEEGNQRNKGNKDNGMVQQELLQDMLSPNSSCGSSLDGAPSPDSYSEEHDALDSKHSRNLHQAMLPIDGSGQR</sequence>
<feature type="chain" id="PRO_0000318117" description="T-cell acute lymphocytic leukemia protein 1">
    <location>
        <begin position="1"/>
        <end position="394"/>
    </location>
</feature>
<feature type="repeat" description="1" evidence="3">
    <location>
        <begin position="83"/>
        <end position="89"/>
    </location>
</feature>
<feature type="repeat" description="2" evidence="3">
    <location>
        <begin position="94"/>
        <end position="100"/>
    </location>
</feature>
<feature type="repeat" description="3" evidence="3">
    <location>
        <begin position="105"/>
        <end position="111"/>
    </location>
</feature>
<feature type="repeat" description="4" evidence="3">
    <location>
        <begin position="116"/>
        <end position="122"/>
    </location>
</feature>
<feature type="repeat" description="5" evidence="3">
    <location>
        <begin position="127"/>
        <end position="133"/>
    </location>
</feature>
<feature type="repeat" description="6" evidence="3">
    <location>
        <begin position="149"/>
        <end position="155"/>
    </location>
</feature>
<feature type="repeat" description="7" evidence="3">
    <location>
        <begin position="167"/>
        <end position="173"/>
    </location>
</feature>
<feature type="domain" description="bHLH" evidence="4">
    <location>
        <begin position="262"/>
        <end position="314"/>
    </location>
</feature>
<feature type="region of interest" description="Disordered" evidence="5">
    <location>
        <begin position="1"/>
        <end position="49"/>
    </location>
</feature>
<feature type="region of interest" description="7 X 7 AA approximate repeats of [TS]-E-L-C-R-[AP]-P" evidence="3">
    <location>
        <begin position="83"/>
        <end position="173"/>
    </location>
</feature>
<feature type="region of interest" description="Disordered" evidence="5">
    <location>
        <begin position="347"/>
        <end position="394"/>
    </location>
</feature>
<feature type="compositionally biased region" description="Basic and acidic residues" evidence="5">
    <location>
        <begin position="1"/>
        <end position="17"/>
    </location>
</feature>
<feature type="compositionally biased region" description="Basic and acidic residues" evidence="5">
    <location>
        <begin position="367"/>
        <end position="377"/>
    </location>
</feature>
<feature type="sequence conflict" description="In Ref. 2; AAH72130." evidence="13" ref="2">
    <original>I</original>
    <variation>Y</variation>
    <location>
        <position position="249"/>
    </location>
</feature>
<proteinExistence type="evidence at transcript level"/>
<organism>
    <name type="scientific">Xenopus laevis</name>
    <name type="common">African clawed frog</name>
    <dbReference type="NCBI Taxonomy" id="8355"/>
    <lineage>
        <taxon>Eukaryota</taxon>
        <taxon>Metazoa</taxon>
        <taxon>Chordata</taxon>
        <taxon>Craniata</taxon>
        <taxon>Vertebrata</taxon>
        <taxon>Euteleostomi</taxon>
        <taxon>Amphibia</taxon>
        <taxon>Batrachia</taxon>
        <taxon>Anura</taxon>
        <taxon>Pipoidea</taxon>
        <taxon>Pipidae</taxon>
        <taxon>Xenopodinae</taxon>
        <taxon>Xenopus</taxon>
        <taxon>Xenopus</taxon>
    </lineage>
</organism>